<dbReference type="EC" id="2.1.1.211"/>
<dbReference type="EMBL" id="AK019101">
    <property type="protein sequence ID" value="BAB31547.1"/>
    <property type="molecule type" value="mRNA"/>
</dbReference>
<dbReference type="EMBL" id="AK132402">
    <property type="protein sequence ID" value="BAE21147.1"/>
    <property type="molecule type" value="mRNA"/>
</dbReference>
<dbReference type="EMBL" id="CH466524">
    <property type="protein sequence ID" value="EDL37486.1"/>
    <property type="molecule type" value="Genomic_DNA"/>
</dbReference>
<dbReference type="EMBL" id="BC152332">
    <property type="protein sequence ID" value="AAI52333.1"/>
    <property type="molecule type" value="mRNA"/>
</dbReference>
<dbReference type="CCDS" id="CCDS19230.1"/>
<dbReference type="RefSeq" id="NP_084484.2">
    <property type="nucleotide sequence ID" value="NM_030208.3"/>
</dbReference>
<dbReference type="FunCoup" id="Q9D2Q2">
    <property type="interactions" value="202"/>
</dbReference>
<dbReference type="STRING" id="10090.ENSMUSP00000030980"/>
<dbReference type="iPTMnet" id="Q9D2Q2"/>
<dbReference type="PhosphoSitePlus" id="Q9D2Q2"/>
<dbReference type="PaxDb" id="10090-ENSMUSP00000030980"/>
<dbReference type="PeptideAtlas" id="Q9D2Q2"/>
<dbReference type="ProteomicsDB" id="258981"/>
<dbReference type="Pumba" id="Q9D2Q2"/>
<dbReference type="Antibodypedia" id="43421">
    <property type="antibodies" value="29 antibodies from 13 providers"/>
</dbReference>
<dbReference type="DNASU" id="78890"/>
<dbReference type="Ensembl" id="ENSMUST00000030980.12">
    <property type="protein sequence ID" value="ENSMUSP00000030980.8"/>
    <property type="gene ID" value="ENSMUSG00000029097.12"/>
</dbReference>
<dbReference type="GeneID" id="78890"/>
<dbReference type="KEGG" id="mmu:78890"/>
<dbReference type="UCSC" id="uc008xdu.2">
    <property type="organism name" value="mouse"/>
</dbReference>
<dbReference type="AGR" id="MGI:1926140"/>
<dbReference type="CTD" id="152992"/>
<dbReference type="MGI" id="MGI:1926140">
    <property type="gene designation" value="Trmt44"/>
</dbReference>
<dbReference type="VEuPathDB" id="HostDB:ENSMUSG00000029097"/>
<dbReference type="eggNOG" id="KOG3790">
    <property type="taxonomic scope" value="Eukaryota"/>
</dbReference>
<dbReference type="GeneTree" id="ENSGT00390000000645"/>
<dbReference type="HOGENOM" id="CLU_021025_1_0_1"/>
<dbReference type="InParanoid" id="Q9D2Q2"/>
<dbReference type="OMA" id="CFFKLHH"/>
<dbReference type="OrthoDB" id="10047021at2759"/>
<dbReference type="PhylomeDB" id="Q9D2Q2"/>
<dbReference type="TreeFam" id="TF106127"/>
<dbReference type="BioGRID-ORCS" id="78890">
    <property type="hits" value="1 hit in 77 CRISPR screens"/>
</dbReference>
<dbReference type="PRO" id="PR:Q9D2Q2"/>
<dbReference type="Proteomes" id="UP000000589">
    <property type="component" value="Chromosome 5"/>
</dbReference>
<dbReference type="RNAct" id="Q9D2Q2">
    <property type="molecule type" value="protein"/>
</dbReference>
<dbReference type="Bgee" id="ENSMUSG00000029097">
    <property type="expression patterns" value="Expressed in spermatocyte and 88 other cell types or tissues"/>
</dbReference>
<dbReference type="ExpressionAtlas" id="Q9D2Q2">
    <property type="expression patterns" value="baseline and differential"/>
</dbReference>
<dbReference type="GO" id="GO:0005737">
    <property type="term" value="C:cytoplasm"/>
    <property type="evidence" value="ECO:0007669"/>
    <property type="project" value="UniProtKB-SubCell"/>
</dbReference>
<dbReference type="GO" id="GO:0141101">
    <property type="term" value="F:tRNA(Ser) (uridine(44)-2'-O-)-methyltransferase activity"/>
    <property type="evidence" value="ECO:0007669"/>
    <property type="project" value="UniProtKB-EC"/>
</dbReference>
<dbReference type="GO" id="GO:0008270">
    <property type="term" value="F:zinc ion binding"/>
    <property type="evidence" value="ECO:0007669"/>
    <property type="project" value="UniProtKB-KW"/>
</dbReference>
<dbReference type="GO" id="GO:0032259">
    <property type="term" value="P:methylation"/>
    <property type="evidence" value="ECO:0007669"/>
    <property type="project" value="UniProtKB-KW"/>
</dbReference>
<dbReference type="GO" id="GO:0008033">
    <property type="term" value="P:tRNA processing"/>
    <property type="evidence" value="ECO:0007669"/>
    <property type="project" value="UniProtKB-KW"/>
</dbReference>
<dbReference type="Gene3D" id="4.10.1000.10">
    <property type="entry name" value="Zinc finger, CCCH-type"/>
    <property type="match status" value="1"/>
</dbReference>
<dbReference type="InterPro" id="IPR029063">
    <property type="entry name" value="SAM-dependent_MTases_sf"/>
</dbReference>
<dbReference type="InterPro" id="IPR011671">
    <property type="entry name" value="tRNA_uracil_MeTrfase"/>
</dbReference>
<dbReference type="InterPro" id="IPR000571">
    <property type="entry name" value="Znf_CCCH"/>
</dbReference>
<dbReference type="PANTHER" id="PTHR21210">
    <property type="entry name" value="TRNA (URACIL-O(2)-)-METHYLTRANSFERASE-RELATED"/>
    <property type="match status" value="1"/>
</dbReference>
<dbReference type="PANTHER" id="PTHR21210:SF0">
    <property type="entry name" value="TRNA (URACIL-O(2)-)-METHYLTRANSFERASE-RELATED"/>
    <property type="match status" value="1"/>
</dbReference>
<dbReference type="Pfam" id="PF07757">
    <property type="entry name" value="AdoMet_MTase"/>
    <property type="match status" value="1"/>
</dbReference>
<dbReference type="SUPFAM" id="SSF53335">
    <property type="entry name" value="S-adenosyl-L-methionine-dependent methyltransferases"/>
    <property type="match status" value="1"/>
</dbReference>
<dbReference type="PROSITE" id="PS50103">
    <property type="entry name" value="ZF_C3H1"/>
    <property type="match status" value="1"/>
</dbReference>
<accession>Q9D2Q2</accession>
<accession>A7MCV4</accession>
<accession>Q3V1K3</accession>
<keyword id="KW-0963">Cytoplasm</keyword>
<keyword id="KW-0479">Metal-binding</keyword>
<keyword id="KW-0489">Methyltransferase</keyword>
<keyword id="KW-0597">Phosphoprotein</keyword>
<keyword id="KW-1185">Reference proteome</keyword>
<keyword id="KW-0949">S-adenosyl-L-methionine</keyword>
<keyword id="KW-0808">Transferase</keyword>
<keyword id="KW-0819">tRNA processing</keyword>
<keyword id="KW-0862">Zinc</keyword>
<keyword id="KW-0863">Zinc-finger</keyword>
<gene>
    <name type="primary">Trmt44</name>
    <name type="synonym">Mettl19</name>
</gene>
<feature type="chain" id="PRO_0000249895" description="Probable tRNA (uracil-O(2)-)-methyltransferase">
    <location>
        <begin position="1"/>
        <end position="713"/>
    </location>
</feature>
<feature type="zinc finger region" description="C3H1-type" evidence="3">
    <location>
        <begin position="669"/>
        <end position="698"/>
    </location>
</feature>
<feature type="region of interest" description="Disordered" evidence="4">
    <location>
        <begin position="49"/>
        <end position="92"/>
    </location>
</feature>
<feature type="region of interest" description="Disordered" evidence="4">
    <location>
        <begin position="480"/>
        <end position="508"/>
    </location>
</feature>
<feature type="compositionally biased region" description="Basic and acidic residues" evidence="4">
    <location>
        <begin position="79"/>
        <end position="89"/>
    </location>
</feature>
<feature type="modified residue" description="Phosphoserine" evidence="2">
    <location>
        <position position="76"/>
    </location>
</feature>
<feature type="modified residue" description="Phosphoserine" evidence="2">
    <location>
        <position position="489"/>
    </location>
</feature>
<feature type="sequence conflict" description="In Ref. 1; BAB31547." evidence="5" ref="1">
    <original>D</original>
    <variation>Y</variation>
    <location>
        <position position="511"/>
    </location>
</feature>
<proteinExistence type="evidence at transcript level"/>
<organism>
    <name type="scientific">Mus musculus</name>
    <name type="common">Mouse</name>
    <dbReference type="NCBI Taxonomy" id="10090"/>
    <lineage>
        <taxon>Eukaryota</taxon>
        <taxon>Metazoa</taxon>
        <taxon>Chordata</taxon>
        <taxon>Craniata</taxon>
        <taxon>Vertebrata</taxon>
        <taxon>Euteleostomi</taxon>
        <taxon>Mammalia</taxon>
        <taxon>Eutheria</taxon>
        <taxon>Euarchontoglires</taxon>
        <taxon>Glires</taxon>
        <taxon>Rodentia</taxon>
        <taxon>Myomorpha</taxon>
        <taxon>Muroidea</taxon>
        <taxon>Muridae</taxon>
        <taxon>Murinae</taxon>
        <taxon>Mus</taxon>
        <taxon>Mus</taxon>
    </lineage>
</organism>
<protein>
    <recommendedName>
        <fullName>Probable tRNA (uracil-O(2)-)-methyltransferase</fullName>
        <ecNumber>2.1.1.211</ecNumber>
    </recommendedName>
    <alternativeName>
        <fullName>Methyltransferase-like protein 19</fullName>
    </alternativeName>
</protein>
<evidence type="ECO:0000250" key="1"/>
<evidence type="ECO:0000250" key="2">
    <source>
        <dbReference type="UniProtKB" id="Q8IYL2"/>
    </source>
</evidence>
<evidence type="ECO:0000255" key="3">
    <source>
        <dbReference type="PROSITE-ProRule" id="PRU00723"/>
    </source>
</evidence>
<evidence type="ECO:0000256" key="4">
    <source>
        <dbReference type="SAM" id="MobiDB-lite"/>
    </source>
</evidence>
<evidence type="ECO:0000305" key="5"/>
<name>TRM44_MOUSE</name>
<reference key="1">
    <citation type="journal article" date="2005" name="Science">
        <title>The transcriptional landscape of the mammalian genome.</title>
        <authorList>
            <person name="Carninci P."/>
            <person name="Kasukawa T."/>
            <person name="Katayama S."/>
            <person name="Gough J."/>
            <person name="Frith M.C."/>
            <person name="Maeda N."/>
            <person name="Oyama R."/>
            <person name="Ravasi T."/>
            <person name="Lenhard B."/>
            <person name="Wells C."/>
            <person name="Kodzius R."/>
            <person name="Shimokawa K."/>
            <person name="Bajic V.B."/>
            <person name="Brenner S.E."/>
            <person name="Batalov S."/>
            <person name="Forrest A.R."/>
            <person name="Zavolan M."/>
            <person name="Davis M.J."/>
            <person name="Wilming L.G."/>
            <person name="Aidinis V."/>
            <person name="Allen J.E."/>
            <person name="Ambesi-Impiombato A."/>
            <person name="Apweiler R."/>
            <person name="Aturaliya R.N."/>
            <person name="Bailey T.L."/>
            <person name="Bansal M."/>
            <person name="Baxter L."/>
            <person name="Beisel K.W."/>
            <person name="Bersano T."/>
            <person name="Bono H."/>
            <person name="Chalk A.M."/>
            <person name="Chiu K.P."/>
            <person name="Choudhary V."/>
            <person name="Christoffels A."/>
            <person name="Clutterbuck D.R."/>
            <person name="Crowe M.L."/>
            <person name="Dalla E."/>
            <person name="Dalrymple B.P."/>
            <person name="de Bono B."/>
            <person name="Della Gatta G."/>
            <person name="di Bernardo D."/>
            <person name="Down T."/>
            <person name="Engstrom P."/>
            <person name="Fagiolini M."/>
            <person name="Faulkner G."/>
            <person name="Fletcher C.F."/>
            <person name="Fukushima T."/>
            <person name="Furuno M."/>
            <person name="Futaki S."/>
            <person name="Gariboldi M."/>
            <person name="Georgii-Hemming P."/>
            <person name="Gingeras T.R."/>
            <person name="Gojobori T."/>
            <person name="Green R.E."/>
            <person name="Gustincich S."/>
            <person name="Harbers M."/>
            <person name="Hayashi Y."/>
            <person name="Hensch T.K."/>
            <person name="Hirokawa N."/>
            <person name="Hill D."/>
            <person name="Huminiecki L."/>
            <person name="Iacono M."/>
            <person name="Ikeo K."/>
            <person name="Iwama A."/>
            <person name="Ishikawa T."/>
            <person name="Jakt M."/>
            <person name="Kanapin A."/>
            <person name="Katoh M."/>
            <person name="Kawasawa Y."/>
            <person name="Kelso J."/>
            <person name="Kitamura H."/>
            <person name="Kitano H."/>
            <person name="Kollias G."/>
            <person name="Krishnan S.P."/>
            <person name="Kruger A."/>
            <person name="Kummerfeld S.K."/>
            <person name="Kurochkin I.V."/>
            <person name="Lareau L.F."/>
            <person name="Lazarevic D."/>
            <person name="Lipovich L."/>
            <person name="Liu J."/>
            <person name="Liuni S."/>
            <person name="McWilliam S."/>
            <person name="Madan Babu M."/>
            <person name="Madera M."/>
            <person name="Marchionni L."/>
            <person name="Matsuda H."/>
            <person name="Matsuzawa S."/>
            <person name="Miki H."/>
            <person name="Mignone F."/>
            <person name="Miyake S."/>
            <person name="Morris K."/>
            <person name="Mottagui-Tabar S."/>
            <person name="Mulder N."/>
            <person name="Nakano N."/>
            <person name="Nakauchi H."/>
            <person name="Ng P."/>
            <person name="Nilsson R."/>
            <person name="Nishiguchi S."/>
            <person name="Nishikawa S."/>
            <person name="Nori F."/>
            <person name="Ohara O."/>
            <person name="Okazaki Y."/>
            <person name="Orlando V."/>
            <person name="Pang K.C."/>
            <person name="Pavan W.J."/>
            <person name="Pavesi G."/>
            <person name="Pesole G."/>
            <person name="Petrovsky N."/>
            <person name="Piazza S."/>
            <person name="Reed J."/>
            <person name="Reid J.F."/>
            <person name="Ring B.Z."/>
            <person name="Ringwald M."/>
            <person name="Rost B."/>
            <person name="Ruan Y."/>
            <person name="Salzberg S.L."/>
            <person name="Sandelin A."/>
            <person name="Schneider C."/>
            <person name="Schoenbach C."/>
            <person name="Sekiguchi K."/>
            <person name="Semple C.A."/>
            <person name="Seno S."/>
            <person name="Sessa L."/>
            <person name="Sheng Y."/>
            <person name="Shibata Y."/>
            <person name="Shimada H."/>
            <person name="Shimada K."/>
            <person name="Silva D."/>
            <person name="Sinclair B."/>
            <person name="Sperling S."/>
            <person name="Stupka E."/>
            <person name="Sugiura K."/>
            <person name="Sultana R."/>
            <person name="Takenaka Y."/>
            <person name="Taki K."/>
            <person name="Tammoja K."/>
            <person name="Tan S.L."/>
            <person name="Tang S."/>
            <person name="Taylor M.S."/>
            <person name="Tegner J."/>
            <person name="Teichmann S.A."/>
            <person name="Ueda H.R."/>
            <person name="van Nimwegen E."/>
            <person name="Verardo R."/>
            <person name="Wei C.L."/>
            <person name="Yagi K."/>
            <person name="Yamanishi H."/>
            <person name="Zabarovsky E."/>
            <person name="Zhu S."/>
            <person name="Zimmer A."/>
            <person name="Hide W."/>
            <person name="Bult C."/>
            <person name="Grimmond S.M."/>
            <person name="Teasdale R.D."/>
            <person name="Liu E.T."/>
            <person name="Brusic V."/>
            <person name="Quackenbush J."/>
            <person name="Wahlestedt C."/>
            <person name="Mattick J.S."/>
            <person name="Hume D.A."/>
            <person name="Kai C."/>
            <person name="Sasaki D."/>
            <person name="Tomaru Y."/>
            <person name="Fukuda S."/>
            <person name="Kanamori-Katayama M."/>
            <person name="Suzuki M."/>
            <person name="Aoki J."/>
            <person name="Arakawa T."/>
            <person name="Iida J."/>
            <person name="Imamura K."/>
            <person name="Itoh M."/>
            <person name="Kato T."/>
            <person name="Kawaji H."/>
            <person name="Kawagashira N."/>
            <person name="Kawashima T."/>
            <person name="Kojima M."/>
            <person name="Kondo S."/>
            <person name="Konno H."/>
            <person name="Nakano K."/>
            <person name="Ninomiya N."/>
            <person name="Nishio T."/>
            <person name="Okada M."/>
            <person name="Plessy C."/>
            <person name="Shibata K."/>
            <person name="Shiraki T."/>
            <person name="Suzuki S."/>
            <person name="Tagami M."/>
            <person name="Waki K."/>
            <person name="Watahiki A."/>
            <person name="Okamura-Oho Y."/>
            <person name="Suzuki H."/>
            <person name="Kawai J."/>
            <person name="Hayashizaki Y."/>
        </authorList>
    </citation>
    <scope>NUCLEOTIDE SEQUENCE [LARGE SCALE MRNA]</scope>
    <source>
        <strain>C57BL/6J</strain>
        <tissue>Liver</tissue>
        <tissue>Tongue</tissue>
    </source>
</reference>
<reference key="2">
    <citation type="submission" date="2005-07" db="EMBL/GenBank/DDBJ databases">
        <authorList>
            <person name="Mural R.J."/>
            <person name="Adams M.D."/>
            <person name="Myers E.W."/>
            <person name="Smith H.O."/>
            <person name="Venter J.C."/>
        </authorList>
    </citation>
    <scope>NUCLEOTIDE SEQUENCE [LARGE SCALE GENOMIC DNA]</scope>
</reference>
<reference key="3">
    <citation type="journal article" date="2004" name="Genome Res.">
        <title>The status, quality, and expansion of the NIH full-length cDNA project: the Mammalian Gene Collection (MGC).</title>
        <authorList>
            <consortium name="The MGC Project Team"/>
        </authorList>
    </citation>
    <scope>NUCLEOTIDE SEQUENCE [LARGE SCALE MRNA]</scope>
</reference>
<sequence length="713" mass="79836">MEELGRVRLSDPDALLPAGFWAAVTVWLERPQVANKRLCGARMEARGRTLRSHAQAECGPRQGQGHGLEREPGQASPKGEPESGPRASREGTAPAADLNSLWDRVSQSLVHANPEMLAFLCGPSLGPQPEAAQELDLILRTVIPKASPHSPLTEPKKELVVQDVSSGSVTFLPLEEDNEGNLEVKTSNVYQLHLHHNEGEWFISVLIFCPERWHSDGVVYPKPAWLGEELLSKLARWAVENRKSEFKSTLSLVSILRYSRMYQELKEKYRDMVKVWPEVTDPEKFVYEDVAIATYLLILWEEERAEKGVTTKQSFVDLGCGNGLLVHILSNEGHPGRGIDIRRRKIWDMYGPQTQLEEGSITPSDETLFPGVDWLIGNHSDELTPWIPVIAARSSYTCRFFVLPCCFFDFVGRYQRQQSRKTQYREYLDFVLEVGLSCGFHVQEDCLRIPSTKRVCLIGKSRTYPPSAEVWMDEQRTRYLHSRQGHPQSRPGGAHAPSAPQTAAHDAGLQDSCRTVNAGSECVLEGLAAERGAGAPAPGLWVPGFCPREKAERVRNCAALPRDFVDQVVLQVANLLLDRKKFNTGNSEARSLKPWNGGGSLSLAEVAAELNSETLQRLKRECGGLQTLLKNSHQVFEVLNGRVHIRDWRQELQRGKPPEAKQNLSAAVFKTRICWFFAHHPDGCVLPAAQCPFAHGPEELRLSQTLKKQRQAP</sequence>
<comment type="function">
    <text evidence="1">Probable adenosyl-L-methionine (AdoMet)-dependent tRNA (uracil-O(2)-)-methyltransferase.</text>
</comment>
<comment type="catalytic activity">
    <reaction>
        <text>uridine(44) in tRNA(Ser) + S-adenosyl-L-methionine = 2'-O-methyluridine(44) in tRNA(Ser) + S-adenosyl-L-homocysteine + H(+)</text>
        <dbReference type="Rhea" id="RHEA:43100"/>
        <dbReference type="Rhea" id="RHEA-COMP:10339"/>
        <dbReference type="Rhea" id="RHEA-COMP:10340"/>
        <dbReference type="ChEBI" id="CHEBI:15378"/>
        <dbReference type="ChEBI" id="CHEBI:57856"/>
        <dbReference type="ChEBI" id="CHEBI:59789"/>
        <dbReference type="ChEBI" id="CHEBI:65315"/>
        <dbReference type="ChEBI" id="CHEBI:74478"/>
        <dbReference type="EC" id="2.1.1.211"/>
    </reaction>
</comment>
<comment type="subcellular location">
    <subcellularLocation>
        <location evidence="5">Cytoplasm</location>
    </subcellularLocation>
</comment>
<comment type="similarity">
    <text evidence="5">Belongs to the TRM44 family.</text>
</comment>